<accession>Q3ZCD8</accession>
<proteinExistence type="evidence at transcript level"/>
<feature type="chain" id="PRO_0000289183" description="Mitochondrial fission factor">
    <location>
        <begin position="1"/>
        <end position="218"/>
    </location>
</feature>
<feature type="topological domain" description="Cytoplasmic" evidence="5">
    <location>
        <begin position="1"/>
        <end position="198"/>
    </location>
</feature>
<feature type="transmembrane region" description="Helical; Anchor for type IV membrane protein" evidence="5">
    <location>
        <begin position="199"/>
        <end position="216"/>
    </location>
</feature>
<feature type="topological domain" description="Mitochondrial intermembrane" evidence="5">
    <location>
        <begin position="217"/>
        <end position="218"/>
    </location>
</feature>
<feature type="coiled-coil region" evidence="5">
    <location>
        <begin position="167"/>
        <end position="198"/>
    </location>
</feature>
<feature type="modified residue" description="Phosphothreonine" evidence="4">
    <location>
        <position position="89"/>
    </location>
</feature>
<feature type="modified residue" description="Phosphoserine" evidence="4">
    <location>
        <position position="129"/>
    </location>
</feature>
<feature type="modified residue" description="Phosphoserine" evidence="4">
    <location>
        <position position="131"/>
    </location>
</feature>
<feature type="modified residue" description="Phosphoserine" evidence="3">
    <location>
        <position position="146"/>
    </location>
</feature>
<feature type="modified residue" description="Phosphoserine" evidence="3">
    <location>
        <position position="171"/>
    </location>
</feature>
<organism>
    <name type="scientific">Bos taurus</name>
    <name type="common">Bovine</name>
    <dbReference type="NCBI Taxonomy" id="9913"/>
    <lineage>
        <taxon>Eukaryota</taxon>
        <taxon>Metazoa</taxon>
        <taxon>Chordata</taxon>
        <taxon>Craniata</taxon>
        <taxon>Vertebrata</taxon>
        <taxon>Euteleostomi</taxon>
        <taxon>Mammalia</taxon>
        <taxon>Eutheria</taxon>
        <taxon>Laurasiatheria</taxon>
        <taxon>Artiodactyla</taxon>
        <taxon>Ruminantia</taxon>
        <taxon>Pecora</taxon>
        <taxon>Bovidae</taxon>
        <taxon>Bovinae</taxon>
        <taxon>Bos</taxon>
    </lineage>
</organism>
<name>MFF_BOVIN</name>
<sequence length="218" mass="25060">MAEISRIQYEMEYTEGISQRMRVPEKLKVAPPNADLEQGFQEGVSNASVIMQVPERIVVAGNNEDIPFSRPADLDLIQSTPFKPLALKTPPRVLTLSERPLDFLDLERPAPTPQNEEIRAVGRLKRERSMSENAVRQNGQLVKTDSMYGISNIDAMIEGTSEDMTVVDAASLRRQIIKLNRRLQLLEEENKERAKREMVMYSITVAFWLLNSWLWFRR</sequence>
<gene>
    <name type="primary">MFF</name>
</gene>
<comment type="function">
    <text evidence="3 4">Plays a role in mitochondrial and peroxisomal fission. Promotes the recruitment and association of the fission mediator dynamin-related protein 1 (DNM1L) to the mitochondrial surface. May be involved in regulation of synaptic vesicle membrane dynamics by recruitment of DNM1L to clathrin-containing vesicles.</text>
</comment>
<comment type="subunit">
    <text evidence="1 3">Homodimer. Interacts with DNM1L. Interacts with C11orf65/MFI; the interaction inhibits MFF interaction with DNM1L.</text>
</comment>
<comment type="subcellular location">
    <subcellularLocation>
        <location evidence="3">Mitochondrion outer membrane</location>
        <topology evidence="5">Single-pass type IV membrane protein</topology>
    </subcellularLocation>
    <subcellularLocation>
        <location evidence="4">Peroxisome</location>
    </subcellularLocation>
    <subcellularLocation>
        <location evidence="2">Cytoplasmic vesicle</location>
        <location evidence="2">Secretory vesicle</location>
        <location evidence="2">Synaptic vesicle</location>
    </subcellularLocation>
</comment>
<comment type="similarity">
    <text evidence="6">Belongs to the Tango11 family.</text>
</comment>
<reference key="1">
    <citation type="submission" date="2005-08" db="EMBL/GenBank/DDBJ databases">
        <authorList>
            <consortium name="NIH - Mammalian Gene Collection (MGC) project"/>
        </authorList>
    </citation>
    <scope>NUCLEOTIDE SEQUENCE [LARGE SCALE MRNA]</scope>
    <source>
        <strain>Crossbred X Angus</strain>
        <tissue>Ileum</tissue>
    </source>
</reference>
<protein>
    <recommendedName>
        <fullName>Mitochondrial fission factor</fullName>
    </recommendedName>
</protein>
<keyword id="KW-0175">Coiled coil</keyword>
<keyword id="KW-0968">Cytoplasmic vesicle</keyword>
<keyword id="KW-0472">Membrane</keyword>
<keyword id="KW-0496">Mitochondrion</keyword>
<keyword id="KW-1000">Mitochondrion outer membrane</keyword>
<keyword id="KW-0576">Peroxisome</keyword>
<keyword id="KW-0597">Phosphoprotein</keyword>
<keyword id="KW-1185">Reference proteome</keyword>
<keyword id="KW-0770">Synapse</keyword>
<keyword id="KW-0812">Transmembrane</keyword>
<keyword id="KW-1133">Transmembrane helix</keyword>
<dbReference type="EMBL" id="BC102501">
    <property type="protein sequence ID" value="AAI02502.1"/>
    <property type="molecule type" value="mRNA"/>
</dbReference>
<dbReference type="RefSeq" id="NP_001029439.1">
    <property type="nucleotide sequence ID" value="NM_001034267.3"/>
</dbReference>
<dbReference type="SMR" id="Q3ZCD8"/>
<dbReference type="FunCoup" id="Q3ZCD8">
    <property type="interactions" value="3800"/>
</dbReference>
<dbReference type="STRING" id="9913.ENSBTAP00000052179"/>
<dbReference type="PaxDb" id="9913-ENSBTAP00000052179"/>
<dbReference type="GeneID" id="506291"/>
<dbReference type="KEGG" id="bta:506291"/>
<dbReference type="CTD" id="56947"/>
<dbReference type="VEuPathDB" id="HostDB:ENSBTAG00000021319"/>
<dbReference type="eggNOG" id="ENOG502R96B">
    <property type="taxonomic scope" value="Eukaryota"/>
</dbReference>
<dbReference type="HOGENOM" id="CLU_066026_0_0_1"/>
<dbReference type="InParanoid" id="Q3ZCD8"/>
<dbReference type="OrthoDB" id="5986838at2759"/>
<dbReference type="Proteomes" id="UP000009136">
    <property type="component" value="Chromosome 2"/>
</dbReference>
<dbReference type="Bgee" id="ENSBTAG00000021319">
    <property type="expression patterns" value="Expressed in spermatocyte and 109 other cell types or tissues"/>
</dbReference>
<dbReference type="GO" id="GO:0005741">
    <property type="term" value="C:mitochondrial outer membrane"/>
    <property type="evidence" value="ECO:0000314"/>
    <property type="project" value="UniProtKB"/>
</dbReference>
<dbReference type="GO" id="GO:0005777">
    <property type="term" value="C:peroxisome"/>
    <property type="evidence" value="ECO:0000250"/>
    <property type="project" value="UniProtKB"/>
</dbReference>
<dbReference type="GO" id="GO:0008021">
    <property type="term" value="C:synaptic vesicle"/>
    <property type="evidence" value="ECO:0007669"/>
    <property type="project" value="UniProtKB-SubCell"/>
</dbReference>
<dbReference type="GO" id="GO:0042803">
    <property type="term" value="F:protein homodimerization activity"/>
    <property type="evidence" value="ECO:0000250"/>
    <property type="project" value="UniProtKB"/>
</dbReference>
<dbReference type="GO" id="GO:0000266">
    <property type="term" value="P:mitochondrial fission"/>
    <property type="evidence" value="ECO:0000250"/>
    <property type="project" value="UniProtKB"/>
</dbReference>
<dbReference type="GO" id="GO:0090141">
    <property type="term" value="P:positive regulation of mitochondrial fission"/>
    <property type="evidence" value="ECO:0000318"/>
    <property type="project" value="GO_Central"/>
</dbReference>
<dbReference type="GO" id="GO:0006626">
    <property type="term" value="P:protein targeting to mitochondrion"/>
    <property type="evidence" value="ECO:0000250"/>
    <property type="project" value="UniProtKB"/>
</dbReference>
<dbReference type="InterPro" id="IPR039433">
    <property type="entry name" value="Mff-like_dom"/>
</dbReference>
<dbReference type="InterPro" id="IPR008518">
    <property type="entry name" value="Mff/Tango-11"/>
</dbReference>
<dbReference type="PANTHER" id="PTHR16501:SF17">
    <property type="entry name" value="MITOCHONDRIAL FISSION FACTOR"/>
    <property type="match status" value="1"/>
</dbReference>
<dbReference type="PANTHER" id="PTHR16501">
    <property type="entry name" value="TRANSPORT AND GOLGI ORGANIZATION PROTEIN 11"/>
    <property type="match status" value="1"/>
</dbReference>
<dbReference type="Pfam" id="PF05644">
    <property type="entry name" value="Miff"/>
    <property type="match status" value="2"/>
</dbReference>
<evidence type="ECO:0000250" key="1"/>
<evidence type="ECO:0000250" key="2">
    <source>
        <dbReference type="UniProtKB" id="Q4KM98"/>
    </source>
</evidence>
<evidence type="ECO:0000250" key="3">
    <source>
        <dbReference type="UniProtKB" id="Q6PCP5"/>
    </source>
</evidence>
<evidence type="ECO:0000250" key="4">
    <source>
        <dbReference type="UniProtKB" id="Q9GZY8"/>
    </source>
</evidence>
<evidence type="ECO:0000255" key="5"/>
<evidence type="ECO:0000305" key="6"/>